<accession>B7LFB9</accession>
<reference key="1">
    <citation type="journal article" date="2009" name="PLoS Genet.">
        <title>Organised genome dynamics in the Escherichia coli species results in highly diverse adaptive paths.</title>
        <authorList>
            <person name="Touchon M."/>
            <person name="Hoede C."/>
            <person name="Tenaillon O."/>
            <person name="Barbe V."/>
            <person name="Baeriswyl S."/>
            <person name="Bidet P."/>
            <person name="Bingen E."/>
            <person name="Bonacorsi S."/>
            <person name="Bouchier C."/>
            <person name="Bouvet O."/>
            <person name="Calteau A."/>
            <person name="Chiapello H."/>
            <person name="Clermont O."/>
            <person name="Cruveiller S."/>
            <person name="Danchin A."/>
            <person name="Diard M."/>
            <person name="Dossat C."/>
            <person name="Karoui M.E."/>
            <person name="Frapy E."/>
            <person name="Garry L."/>
            <person name="Ghigo J.M."/>
            <person name="Gilles A.M."/>
            <person name="Johnson J."/>
            <person name="Le Bouguenec C."/>
            <person name="Lescat M."/>
            <person name="Mangenot S."/>
            <person name="Martinez-Jehanne V."/>
            <person name="Matic I."/>
            <person name="Nassif X."/>
            <person name="Oztas S."/>
            <person name="Petit M.A."/>
            <person name="Pichon C."/>
            <person name="Rouy Z."/>
            <person name="Ruf C.S."/>
            <person name="Schneider D."/>
            <person name="Tourret J."/>
            <person name="Vacherie B."/>
            <person name="Vallenet D."/>
            <person name="Medigue C."/>
            <person name="Rocha E.P.C."/>
            <person name="Denamur E."/>
        </authorList>
    </citation>
    <scope>NUCLEOTIDE SEQUENCE [LARGE SCALE GENOMIC DNA]</scope>
    <source>
        <strain>55989 / EAEC</strain>
    </source>
</reference>
<gene>
    <name evidence="1" type="primary">rutD</name>
    <name type="ordered locus">EC55989_1120</name>
</gene>
<proteinExistence type="inferred from homology"/>
<keyword id="KW-0378">Hydrolase</keyword>
<keyword id="KW-1185">Reference proteome</keyword>
<sequence>MKLSLSPPPYADAPVVVLISGLGGSGSYWLPQLAVLEQEYQVVCYDQRGTGNNPDTLAEDYSIAQMAAELHQALVAAGIEHYAVVGHALGALVGMQLALDYPASVTVLISVNGWLRINAHTRRCFQVRERLLYSGGAQAWVEAQPLFLYPADWMAARAPRLEAEDALALAHFQGKNNLLRRLNALKRADFSHHADRIRCPVQIICASDDLLVPSACSSELHAALPDSQKMVMRYGGHACNVTDPETFNALLLNGLASLLHHREAAL</sequence>
<evidence type="ECO:0000255" key="1">
    <source>
        <dbReference type="HAMAP-Rule" id="MF_00832"/>
    </source>
</evidence>
<dbReference type="EC" id="3.5.1.-" evidence="1"/>
<dbReference type="EMBL" id="CU928145">
    <property type="protein sequence ID" value="CAU96981.1"/>
    <property type="molecule type" value="Genomic_DNA"/>
</dbReference>
<dbReference type="RefSeq" id="WP_001307099.1">
    <property type="nucleotide sequence ID" value="NC_011748.1"/>
</dbReference>
<dbReference type="SMR" id="B7LFB9"/>
<dbReference type="ESTHER" id="ecoli-rutD">
    <property type="family name" value="RutD"/>
</dbReference>
<dbReference type="KEGG" id="eck:EC55989_1120"/>
<dbReference type="HOGENOM" id="CLU_020336_50_1_6"/>
<dbReference type="Proteomes" id="UP000000746">
    <property type="component" value="Chromosome"/>
</dbReference>
<dbReference type="GO" id="GO:0016811">
    <property type="term" value="F:hydrolase activity, acting on carbon-nitrogen (but not peptide) bonds, in linear amides"/>
    <property type="evidence" value="ECO:0007669"/>
    <property type="project" value="InterPro"/>
</dbReference>
<dbReference type="GO" id="GO:0019740">
    <property type="term" value="P:nitrogen utilization"/>
    <property type="evidence" value="ECO:0007669"/>
    <property type="project" value="UniProtKB-UniRule"/>
</dbReference>
<dbReference type="GO" id="GO:0006212">
    <property type="term" value="P:uracil catabolic process"/>
    <property type="evidence" value="ECO:0007669"/>
    <property type="project" value="UniProtKB-UniRule"/>
</dbReference>
<dbReference type="FunFam" id="3.40.50.1820:FF:000052">
    <property type="entry name" value="Putative aminoacrylate hydrolase RutD"/>
    <property type="match status" value="1"/>
</dbReference>
<dbReference type="Gene3D" id="3.40.50.1820">
    <property type="entry name" value="alpha/beta hydrolase"/>
    <property type="match status" value="1"/>
</dbReference>
<dbReference type="HAMAP" id="MF_00832">
    <property type="entry name" value="RutD"/>
    <property type="match status" value="1"/>
</dbReference>
<dbReference type="InterPro" id="IPR000073">
    <property type="entry name" value="AB_hydrolase_1"/>
</dbReference>
<dbReference type="InterPro" id="IPR029058">
    <property type="entry name" value="AB_hydrolase_fold"/>
</dbReference>
<dbReference type="InterPro" id="IPR050266">
    <property type="entry name" value="AB_hydrolase_sf"/>
</dbReference>
<dbReference type="InterPro" id="IPR019913">
    <property type="entry name" value="Pyrimidine_utilisation_RutD"/>
</dbReference>
<dbReference type="NCBIfam" id="TIGR03611">
    <property type="entry name" value="RutD"/>
    <property type="match status" value="1"/>
</dbReference>
<dbReference type="PANTHER" id="PTHR43798">
    <property type="entry name" value="MONOACYLGLYCEROL LIPASE"/>
    <property type="match status" value="1"/>
</dbReference>
<dbReference type="Pfam" id="PF00561">
    <property type="entry name" value="Abhydrolase_1"/>
    <property type="match status" value="1"/>
</dbReference>
<dbReference type="SUPFAM" id="SSF53474">
    <property type="entry name" value="alpha/beta-Hydrolases"/>
    <property type="match status" value="1"/>
</dbReference>
<protein>
    <recommendedName>
        <fullName evidence="1">Putative carbamate hydrolase RutD</fullName>
        <ecNumber evidence="1">3.5.1.-</ecNumber>
    </recommendedName>
    <alternativeName>
        <fullName evidence="1">Aminohydrolase</fullName>
    </alternativeName>
</protein>
<comment type="function">
    <text evidence="1">Involved in pyrimidine catabolism. May facilitate the hydrolysis of carbamate, a reaction that can also occur spontaneously.</text>
</comment>
<comment type="catalytic activity">
    <reaction evidence="1">
        <text>carbamate + 2 H(+) = NH4(+) + CO2</text>
        <dbReference type="Rhea" id="RHEA:15649"/>
        <dbReference type="ChEBI" id="CHEBI:13941"/>
        <dbReference type="ChEBI" id="CHEBI:15378"/>
        <dbReference type="ChEBI" id="CHEBI:16526"/>
        <dbReference type="ChEBI" id="CHEBI:28938"/>
    </reaction>
</comment>
<comment type="similarity">
    <text evidence="1">Belongs to the AB hydrolase superfamily. Hydrolase RutD family.</text>
</comment>
<feature type="chain" id="PRO_0000402936" description="Putative carbamate hydrolase RutD">
    <location>
        <begin position="1"/>
        <end position="266"/>
    </location>
</feature>
<feature type="domain" description="AB hydrolase-1" evidence="1">
    <location>
        <begin position="14"/>
        <end position="115"/>
    </location>
</feature>
<name>RUTD_ECO55</name>
<organism>
    <name type="scientific">Escherichia coli (strain 55989 / EAEC)</name>
    <dbReference type="NCBI Taxonomy" id="585055"/>
    <lineage>
        <taxon>Bacteria</taxon>
        <taxon>Pseudomonadati</taxon>
        <taxon>Pseudomonadota</taxon>
        <taxon>Gammaproteobacteria</taxon>
        <taxon>Enterobacterales</taxon>
        <taxon>Enterobacteriaceae</taxon>
        <taxon>Escherichia</taxon>
    </lineage>
</organism>